<organism>
    <name type="scientific">Lactiplantibacillus plantarum (strain ATCC BAA-793 / NCIMB 8826 / WCFS1)</name>
    <name type="common">Lactobacillus plantarum</name>
    <dbReference type="NCBI Taxonomy" id="220668"/>
    <lineage>
        <taxon>Bacteria</taxon>
        <taxon>Bacillati</taxon>
        <taxon>Bacillota</taxon>
        <taxon>Bacilli</taxon>
        <taxon>Lactobacillales</taxon>
        <taxon>Lactobacillaceae</taxon>
        <taxon>Lactiplantibacillus</taxon>
    </lineage>
</organism>
<comment type="function">
    <text evidence="1">Endoribonuclease that initiates mRNA decay.</text>
</comment>
<comment type="subcellular location">
    <subcellularLocation>
        <location evidence="1">Cell membrane</location>
        <topology evidence="1">Single-pass membrane protein</topology>
    </subcellularLocation>
</comment>
<comment type="similarity">
    <text evidence="1">Belongs to the RNase Y family.</text>
</comment>
<accession>Q88UZ5</accession>
<accession>F9UQL1</accession>
<name>RNY_LACPL</name>
<protein>
    <recommendedName>
        <fullName evidence="1">Ribonuclease Y</fullName>
        <shortName evidence="1">RNase Y</shortName>
        <ecNumber evidence="1">3.1.-.-</ecNumber>
    </recommendedName>
</protein>
<reference key="1">
    <citation type="journal article" date="2003" name="Proc. Natl. Acad. Sci. U.S.A.">
        <title>Complete genome sequence of Lactobacillus plantarum WCFS1.</title>
        <authorList>
            <person name="Kleerebezem M."/>
            <person name="Boekhorst J."/>
            <person name="van Kranenburg R."/>
            <person name="Molenaar D."/>
            <person name="Kuipers O.P."/>
            <person name="Leer R."/>
            <person name="Tarchini R."/>
            <person name="Peters S.A."/>
            <person name="Sandbrink H.M."/>
            <person name="Fiers M.W.E.J."/>
            <person name="Stiekema W."/>
            <person name="Klein Lankhorst R.M."/>
            <person name="Bron P.A."/>
            <person name="Hoffer S.M."/>
            <person name="Nierop Groot M.N."/>
            <person name="Kerkhoven R."/>
            <person name="De Vries M."/>
            <person name="Ursing B."/>
            <person name="De Vos W.M."/>
            <person name="Siezen R.J."/>
        </authorList>
    </citation>
    <scope>NUCLEOTIDE SEQUENCE [LARGE SCALE GENOMIC DNA]</scope>
    <source>
        <strain>ATCC BAA-793 / NCIMB 8826 / WCFS1</strain>
    </source>
</reference>
<reference key="2">
    <citation type="journal article" date="2012" name="J. Bacteriol.">
        <title>Complete resequencing and reannotation of the Lactobacillus plantarum WCFS1 genome.</title>
        <authorList>
            <person name="Siezen R.J."/>
            <person name="Francke C."/>
            <person name="Renckens B."/>
            <person name="Boekhorst J."/>
            <person name="Wels M."/>
            <person name="Kleerebezem M."/>
            <person name="van Hijum S.A."/>
        </authorList>
    </citation>
    <scope>NUCLEOTIDE SEQUENCE [LARGE SCALE GENOMIC DNA]</scope>
    <scope>GENOME REANNOTATION</scope>
    <source>
        <strain>ATCC BAA-793 / NCIMB 8826 / WCFS1</strain>
    </source>
</reference>
<evidence type="ECO:0000255" key="1">
    <source>
        <dbReference type="HAMAP-Rule" id="MF_00335"/>
    </source>
</evidence>
<evidence type="ECO:0000255" key="2">
    <source>
        <dbReference type="PROSITE-ProRule" id="PRU01175"/>
    </source>
</evidence>
<feature type="chain" id="PRO_0000163777" description="Ribonuclease Y">
    <location>
        <begin position="1"/>
        <end position="519"/>
    </location>
</feature>
<feature type="transmembrane region" description="Helical" evidence="1">
    <location>
        <begin position="3"/>
        <end position="23"/>
    </location>
</feature>
<feature type="domain" description="KH" evidence="1">
    <location>
        <begin position="209"/>
        <end position="272"/>
    </location>
</feature>
<feature type="domain" description="HD" evidence="2">
    <location>
        <begin position="335"/>
        <end position="428"/>
    </location>
</feature>
<gene>
    <name evidence="1" type="primary">rny</name>
    <name type="ordered locus">lp_2300</name>
</gene>
<sequence length="519" mass="58162">MNVFGIILAVIAIVVGYGIGYYVRKNVHEKELDVARNTAEGIISEAKRAAETHKKEKVLEAKEESHRYRAEVETELKQRRNEVQKQEDRLLQREETLDHKENTFEKREDALGKKEDKIANEQKRVEQQQQSAASLITQRQAELERVAALSQEQARDQILTQTREQLTHERAVLIKENTDEVKAQSEKEAKNLIVQAIQQSAADMVSETTVSVVSLPNDDMKGRIIGREGRNIRTLETLTGIDLIIDDTPEAVVLSGYDPIRREIAKIALEKLIQDGRIHPARIEEMVEKARKEMDEKIRETGEQAVFDLGLHGMHPDLIKLVGRLNYRTSYGQNVLNHSIEVAKLAGVLAAELGEDVTLAKRAGLLHDIGKAVDHEVEGSHVEIGVELTTKYKESPVVINTIASHHGDVEAKSIIAVLVATSDSISAARPGARSESLENYIHRLEKLEAIANNEDGVKKSYAIQAGREIRVIVKPNEISDLQATVLAHDVKKQIENELEYPGHIKVTVIREVRAVDYAK</sequence>
<dbReference type="EC" id="3.1.-.-" evidence="1"/>
<dbReference type="EMBL" id="AL935263">
    <property type="protein sequence ID" value="CCC79500.1"/>
    <property type="molecule type" value="Genomic_DNA"/>
</dbReference>
<dbReference type="RefSeq" id="WP_003644638.1">
    <property type="nucleotide sequence ID" value="NC_004567.2"/>
</dbReference>
<dbReference type="RefSeq" id="YP_004890014.1">
    <property type="nucleotide sequence ID" value="NC_004567.2"/>
</dbReference>
<dbReference type="SMR" id="Q88UZ5"/>
<dbReference type="STRING" id="220668.lp_2300"/>
<dbReference type="EnsemblBacteria" id="CCC79500">
    <property type="protein sequence ID" value="CCC79500"/>
    <property type="gene ID" value="lp_2300"/>
</dbReference>
<dbReference type="KEGG" id="lpl:lp_2300"/>
<dbReference type="PATRIC" id="fig|220668.9.peg.1944"/>
<dbReference type="eggNOG" id="COG1418">
    <property type="taxonomic scope" value="Bacteria"/>
</dbReference>
<dbReference type="HOGENOM" id="CLU_028328_1_0_9"/>
<dbReference type="OrthoDB" id="9803205at2"/>
<dbReference type="PhylomeDB" id="Q88UZ5"/>
<dbReference type="Proteomes" id="UP000000432">
    <property type="component" value="Chromosome"/>
</dbReference>
<dbReference type="GO" id="GO:0005886">
    <property type="term" value="C:plasma membrane"/>
    <property type="evidence" value="ECO:0007669"/>
    <property type="project" value="UniProtKB-SubCell"/>
</dbReference>
<dbReference type="GO" id="GO:0003723">
    <property type="term" value="F:RNA binding"/>
    <property type="evidence" value="ECO:0007669"/>
    <property type="project" value="UniProtKB-UniRule"/>
</dbReference>
<dbReference type="GO" id="GO:0004521">
    <property type="term" value="F:RNA endonuclease activity"/>
    <property type="evidence" value="ECO:0007669"/>
    <property type="project" value="UniProtKB-UniRule"/>
</dbReference>
<dbReference type="GO" id="GO:0006402">
    <property type="term" value="P:mRNA catabolic process"/>
    <property type="evidence" value="ECO:0007669"/>
    <property type="project" value="UniProtKB-UniRule"/>
</dbReference>
<dbReference type="CDD" id="cd00077">
    <property type="entry name" value="HDc"/>
    <property type="match status" value="1"/>
</dbReference>
<dbReference type="CDD" id="cd22431">
    <property type="entry name" value="KH-I_RNaseY"/>
    <property type="match status" value="1"/>
</dbReference>
<dbReference type="FunFam" id="1.10.3210.10:FF:000003">
    <property type="entry name" value="Ribonuclease Y"/>
    <property type="match status" value="1"/>
</dbReference>
<dbReference type="FunFam" id="3.30.1370.10:FF:000006">
    <property type="entry name" value="Ribonuclease Y"/>
    <property type="match status" value="1"/>
</dbReference>
<dbReference type="Gene3D" id="1.10.3210.10">
    <property type="entry name" value="Hypothetical protein af1432"/>
    <property type="match status" value="1"/>
</dbReference>
<dbReference type="Gene3D" id="3.30.1370.10">
    <property type="entry name" value="K Homology domain, type 1"/>
    <property type="match status" value="1"/>
</dbReference>
<dbReference type="HAMAP" id="MF_00335">
    <property type="entry name" value="RNase_Y"/>
    <property type="match status" value="1"/>
</dbReference>
<dbReference type="InterPro" id="IPR003607">
    <property type="entry name" value="HD/PDEase_dom"/>
</dbReference>
<dbReference type="InterPro" id="IPR006674">
    <property type="entry name" value="HD_domain"/>
</dbReference>
<dbReference type="InterPro" id="IPR006675">
    <property type="entry name" value="HDIG_dom"/>
</dbReference>
<dbReference type="InterPro" id="IPR004087">
    <property type="entry name" value="KH_dom"/>
</dbReference>
<dbReference type="InterPro" id="IPR004088">
    <property type="entry name" value="KH_dom_type_1"/>
</dbReference>
<dbReference type="InterPro" id="IPR036612">
    <property type="entry name" value="KH_dom_type_1_sf"/>
</dbReference>
<dbReference type="InterPro" id="IPR017705">
    <property type="entry name" value="Ribonuclease_Y"/>
</dbReference>
<dbReference type="InterPro" id="IPR022711">
    <property type="entry name" value="RNase_Y_N"/>
</dbReference>
<dbReference type="NCBIfam" id="TIGR00277">
    <property type="entry name" value="HDIG"/>
    <property type="match status" value="1"/>
</dbReference>
<dbReference type="NCBIfam" id="TIGR03319">
    <property type="entry name" value="RNase_Y"/>
    <property type="match status" value="1"/>
</dbReference>
<dbReference type="PANTHER" id="PTHR12826">
    <property type="entry name" value="RIBONUCLEASE Y"/>
    <property type="match status" value="1"/>
</dbReference>
<dbReference type="PANTHER" id="PTHR12826:SF15">
    <property type="entry name" value="RIBONUCLEASE Y"/>
    <property type="match status" value="1"/>
</dbReference>
<dbReference type="Pfam" id="PF01966">
    <property type="entry name" value="HD"/>
    <property type="match status" value="1"/>
</dbReference>
<dbReference type="Pfam" id="PF00013">
    <property type="entry name" value="KH_1"/>
    <property type="match status" value="1"/>
</dbReference>
<dbReference type="Pfam" id="PF12072">
    <property type="entry name" value="RNase_Y_N"/>
    <property type="match status" value="1"/>
</dbReference>
<dbReference type="SMART" id="SM00471">
    <property type="entry name" value="HDc"/>
    <property type="match status" value="1"/>
</dbReference>
<dbReference type="SMART" id="SM00322">
    <property type="entry name" value="KH"/>
    <property type="match status" value="1"/>
</dbReference>
<dbReference type="SUPFAM" id="SSF54791">
    <property type="entry name" value="Eukaryotic type KH-domain (KH-domain type I)"/>
    <property type="match status" value="1"/>
</dbReference>
<dbReference type="SUPFAM" id="SSF109604">
    <property type="entry name" value="HD-domain/PDEase-like"/>
    <property type="match status" value="1"/>
</dbReference>
<dbReference type="PROSITE" id="PS51831">
    <property type="entry name" value="HD"/>
    <property type="match status" value="1"/>
</dbReference>
<dbReference type="PROSITE" id="PS50084">
    <property type="entry name" value="KH_TYPE_1"/>
    <property type="match status" value="1"/>
</dbReference>
<keyword id="KW-1003">Cell membrane</keyword>
<keyword id="KW-0255">Endonuclease</keyword>
<keyword id="KW-0378">Hydrolase</keyword>
<keyword id="KW-0472">Membrane</keyword>
<keyword id="KW-0540">Nuclease</keyword>
<keyword id="KW-1185">Reference proteome</keyword>
<keyword id="KW-0694">RNA-binding</keyword>
<keyword id="KW-0812">Transmembrane</keyword>
<keyword id="KW-1133">Transmembrane helix</keyword>
<proteinExistence type="inferred from homology"/>